<proteinExistence type="evidence at protein level"/>
<sequence length="148" mass="14988">TIQDAPDVAAEKARFFLAYQAALPATPPKPADPPKWYGPLASKIPAGLPGSSANVALTADLSAARNAFYNTYNAQVAAVAPKSDGPVFAVVPVATSAQWTGPVAATLPAGVPGSSPNVAETADVLNAKNAFFTTYNQQVAAVAPAPKV</sequence>
<feature type="chain" id="PRO_0000196164" description="Cuticle protein CP1499">
    <location>
        <begin position="1"/>
        <end position="148"/>
    </location>
</feature>
<keyword id="KW-0193">Cuticle</keyword>
<keyword id="KW-0903">Direct protein sequencing</keyword>
<dbReference type="GO" id="GO:0042302">
    <property type="term" value="F:structural constituent of cuticle"/>
    <property type="evidence" value="ECO:0007669"/>
    <property type="project" value="UniProtKB-KW"/>
</dbReference>
<organism>
    <name type="scientific">Cancer pagurus</name>
    <name type="common">Rock crab</name>
    <dbReference type="NCBI Taxonomy" id="6755"/>
    <lineage>
        <taxon>Eukaryota</taxon>
        <taxon>Metazoa</taxon>
        <taxon>Ecdysozoa</taxon>
        <taxon>Arthropoda</taxon>
        <taxon>Crustacea</taxon>
        <taxon>Multicrustacea</taxon>
        <taxon>Malacostraca</taxon>
        <taxon>Eumalacostraca</taxon>
        <taxon>Eucarida</taxon>
        <taxon>Decapoda</taxon>
        <taxon>Pleocyemata</taxon>
        <taxon>Brachyura</taxon>
        <taxon>Eubrachyura</taxon>
        <taxon>Cancroidea</taxon>
        <taxon>Cancridae</taxon>
        <taxon>Cancer</taxon>
    </lineage>
</organism>
<comment type="tissue specificity">
    <text>Calcified shell.</text>
</comment>
<comment type="mass spectrometry" mass="14979.4" method="MALDI" evidence="1"/>
<accession>P81583</accession>
<name>CUPC4_CANPG</name>
<reference key="1">
    <citation type="journal article" date="1999" name="Comp. Biochem. Physiol.">
        <title>Exoskeletal proteins from the crab, Cancer pagurus.</title>
        <authorList>
            <person name="Andersen S.O."/>
        </authorList>
    </citation>
    <scope>PROTEIN SEQUENCE</scope>
    <scope>MASS SPECTROMETRY</scope>
    <source>
        <tissue>Carapace cuticle</tissue>
    </source>
</reference>
<evidence type="ECO:0000269" key="1">
    <source>
    </source>
</evidence>
<protein>
    <recommendedName>
        <fullName>Cuticle protein CP1499</fullName>
        <shortName>CPCP1499</shortName>
    </recommendedName>
</protein>